<reference key="1">
    <citation type="journal article" date="2002" name="Proc. Natl. Acad. Sci. U.S.A.">
        <title>The genome sequence of the facultative intracellular pathogen Brucella melitensis.</title>
        <authorList>
            <person name="DelVecchio V.G."/>
            <person name="Kapatral V."/>
            <person name="Redkar R.J."/>
            <person name="Patra G."/>
            <person name="Mujer C."/>
            <person name="Los T."/>
            <person name="Ivanova N."/>
            <person name="Anderson I."/>
            <person name="Bhattacharyya A."/>
            <person name="Lykidis A."/>
            <person name="Reznik G."/>
            <person name="Jablonski L."/>
            <person name="Larsen N."/>
            <person name="D'Souza M."/>
            <person name="Bernal A."/>
            <person name="Mazur M."/>
            <person name="Goltsman E."/>
            <person name="Selkov E."/>
            <person name="Elzer P.H."/>
            <person name="Hagius S."/>
            <person name="O'Callaghan D."/>
            <person name="Letesson J.-J."/>
            <person name="Haselkorn R."/>
            <person name="Kyrpides N.C."/>
            <person name="Overbeek R."/>
        </authorList>
    </citation>
    <scope>NUCLEOTIDE SEQUENCE [LARGE SCALE GENOMIC DNA]</scope>
    <source>
        <strain>ATCC 23456 / CCUG 17765 / NCTC 10094 / 16M</strain>
    </source>
</reference>
<sequence length="202" mass="21957">MTAESTRKASIERSTKETSIAVSVDLDGVGKFDITTGVGFFDHMLEQLSRHSLIDMRVMAKGDLHIDDHHTVEDTGIALGQAVAKALGERRGIVRYASLDLAMDDTLTGAAVDVSGRAFLVWNVNFTTAKIGTFDTELVREFFQAFAMNAGITLHINNHYGANNHHIAESTFKAVARVLRAALETDPRQKDAIPSTKGSLKG</sequence>
<accession>P64366</accession>
<accession>Q8YE33</accession>
<organism>
    <name type="scientific">Brucella melitensis biotype 1 (strain ATCC 23456 / CCUG 17765 / NCTC 10094 / 16M)</name>
    <dbReference type="NCBI Taxonomy" id="224914"/>
    <lineage>
        <taxon>Bacteria</taxon>
        <taxon>Pseudomonadati</taxon>
        <taxon>Pseudomonadota</taxon>
        <taxon>Alphaproteobacteria</taxon>
        <taxon>Hyphomicrobiales</taxon>
        <taxon>Brucellaceae</taxon>
        <taxon>Brucella/Ochrobactrum group</taxon>
        <taxon>Brucella</taxon>
    </lineage>
</organism>
<feature type="chain" id="PRO_0000158116" description="Imidazoleglycerol-phosphate dehydratase">
    <location>
        <begin position="1"/>
        <end position="202"/>
    </location>
</feature>
<dbReference type="EC" id="4.2.1.19" evidence="1"/>
<dbReference type="EMBL" id="AE008917">
    <property type="protein sequence ID" value="AAL53226.1"/>
    <property type="molecule type" value="Genomic_DNA"/>
</dbReference>
<dbReference type="PIR" id="AG3507">
    <property type="entry name" value="AG3507"/>
</dbReference>
<dbReference type="RefSeq" id="WP_002967034.1">
    <property type="nucleotide sequence ID" value="NZ_GG703778.1"/>
</dbReference>
<dbReference type="SMR" id="P64366"/>
<dbReference type="GeneID" id="97534656"/>
<dbReference type="KEGG" id="bme:BMEI2045"/>
<dbReference type="KEGG" id="bmel:DK63_1448"/>
<dbReference type="PATRIC" id="fig|224914.52.peg.1525"/>
<dbReference type="eggNOG" id="COG0131">
    <property type="taxonomic scope" value="Bacteria"/>
</dbReference>
<dbReference type="PhylomeDB" id="P64366"/>
<dbReference type="UniPathway" id="UPA00031">
    <property type="reaction ID" value="UER00011"/>
</dbReference>
<dbReference type="Proteomes" id="UP000000419">
    <property type="component" value="Chromosome I"/>
</dbReference>
<dbReference type="GO" id="GO:0005737">
    <property type="term" value="C:cytoplasm"/>
    <property type="evidence" value="ECO:0007669"/>
    <property type="project" value="UniProtKB-SubCell"/>
</dbReference>
<dbReference type="GO" id="GO:0004424">
    <property type="term" value="F:imidazoleglycerol-phosphate dehydratase activity"/>
    <property type="evidence" value="ECO:0007669"/>
    <property type="project" value="UniProtKB-UniRule"/>
</dbReference>
<dbReference type="GO" id="GO:0000105">
    <property type="term" value="P:L-histidine biosynthetic process"/>
    <property type="evidence" value="ECO:0007669"/>
    <property type="project" value="UniProtKB-UniRule"/>
</dbReference>
<dbReference type="CDD" id="cd07914">
    <property type="entry name" value="IGPD"/>
    <property type="match status" value="1"/>
</dbReference>
<dbReference type="FunFam" id="3.30.230.40:FF:000001">
    <property type="entry name" value="Imidazoleglycerol-phosphate dehydratase HisB"/>
    <property type="match status" value="1"/>
</dbReference>
<dbReference type="FunFam" id="3.30.230.40:FF:000003">
    <property type="entry name" value="Imidazoleglycerol-phosphate dehydratase HisB"/>
    <property type="match status" value="1"/>
</dbReference>
<dbReference type="Gene3D" id="3.30.230.40">
    <property type="entry name" value="Imidazole glycerol phosphate dehydratase, domain 1"/>
    <property type="match status" value="2"/>
</dbReference>
<dbReference type="HAMAP" id="MF_00076">
    <property type="entry name" value="HisB"/>
    <property type="match status" value="1"/>
</dbReference>
<dbReference type="InterPro" id="IPR038494">
    <property type="entry name" value="IGPD_sf"/>
</dbReference>
<dbReference type="InterPro" id="IPR000807">
    <property type="entry name" value="ImidazoleglycerolP_deHydtase"/>
</dbReference>
<dbReference type="InterPro" id="IPR020565">
    <property type="entry name" value="ImidazoleglycerP_deHydtase_CS"/>
</dbReference>
<dbReference type="InterPro" id="IPR020568">
    <property type="entry name" value="Ribosomal_Su5_D2-typ_SF"/>
</dbReference>
<dbReference type="NCBIfam" id="NF002109">
    <property type="entry name" value="PRK00951.1-5"/>
    <property type="match status" value="1"/>
</dbReference>
<dbReference type="NCBIfam" id="NF002111">
    <property type="entry name" value="PRK00951.2-1"/>
    <property type="match status" value="1"/>
</dbReference>
<dbReference type="NCBIfam" id="NF002114">
    <property type="entry name" value="PRK00951.2-4"/>
    <property type="match status" value="1"/>
</dbReference>
<dbReference type="PANTHER" id="PTHR23133:SF2">
    <property type="entry name" value="IMIDAZOLEGLYCEROL-PHOSPHATE DEHYDRATASE"/>
    <property type="match status" value="1"/>
</dbReference>
<dbReference type="PANTHER" id="PTHR23133">
    <property type="entry name" value="IMIDAZOLEGLYCEROL-PHOSPHATE DEHYDRATASE HIS7"/>
    <property type="match status" value="1"/>
</dbReference>
<dbReference type="Pfam" id="PF00475">
    <property type="entry name" value="IGPD"/>
    <property type="match status" value="1"/>
</dbReference>
<dbReference type="SUPFAM" id="SSF54211">
    <property type="entry name" value="Ribosomal protein S5 domain 2-like"/>
    <property type="match status" value="2"/>
</dbReference>
<dbReference type="PROSITE" id="PS00954">
    <property type="entry name" value="IGP_DEHYDRATASE_1"/>
    <property type="match status" value="1"/>
</dbReference>
<dbReference type="PROSITE" id="PS00955">
    <property type="entry name" value="IGP_DEHYDRATASE_2"/>
    <property type="match status" value="1"/>
</dbReference>
<comment type="catalytic activity">
    <reaction evidence="1">
        <text>D-erythro-1-(imidazol-4-yl)glycerol 3-phosphate = 3-(imidazol-4-yl)-2-oxopropyl phosphate + H2O</text>
        <dbReference type="Rhea" id="RHEA:11040"/>
        <dbReference type="ChEBI" id="CHEBI:15377"/>
        <dbReference type="ChEBI" id="CHEBI:57766"/>
        <dbReference type="ChEBI" id="CHEBI:58278"/>
        <dbReference type="EC" id="4.2.1.19"/>
    </reaction>
</comment>
<comment type="pathway">
    <text evidence="1">Amino-acid biosynthesis; L-histidine biosynthesis; L-histidine from 5-phospho-alpha-D-ribose 1-diphosphate: step 6/9.</text>
</comment>
<comment type="subcellular location">
    <subcellularLocation>
        <location evidence="1">Cytoplasm</location>
    </subcellularLocation>
</comment>
<comment type="similarity">
    <text evidence="1">Belongs to the imidazoleglycerol-phosphate dehydratase family.</text>
</comment>
<keyword id="KW-0028">Amino-acid biosynthesis</keyword>
<keyword id="KW-0963">Cytoplasm</keyword>
<keyword id="KW-0368">Histidine biosynthesis</keyword>
<keyword id="KW-0456">Lyase</keyword>
<name>HIS7_BRUME</name>
<evidence type="ECO:0000255" key="1">
    <source>
        <dbReference type="HAMAP-Rule" id="MF_00076"/>
    </source>
</evidence>
<gene>
    <name evidence="1" type="primary">hisB</name>
    <name type="ordered locus">BMEI2045</name>
</gene>
<protein>
    <recommendedName>
        <fullName evidence="1">Imidazoleglycerol-phosphate dehydratase</fullName>
        <shortName evidence="1">IGPD</shortName>
        <ecNumber evidence="1">4.2.1.19</ecNumber>
    </recommendedName>
</protein>
<proteinExistence type="inferred from homology"/>